<feature type="chain" id="PRO_0000417140" description="Truncated transcription factor CAULIFLOWER A">
    <location>
        <begin position="1"/>
        <end position="150"/>
    </location>
</feature>
<feature type="domain" description="MADS-box" evidence="2">
    <location>
        <begin position="1"/>
        <end position="61"/>
    </location>
</feature>
<feature type="domain" description="K-box; partial" evidence="3">
    <location>
        <begin position="90"/>
        <end position="150"/>
    </location>
</feature>
<feature type="sequence conflict" description="In Ref. 3; AAS67310." evidence="6" ref="3">
    <original>D</original>
    <variation>G</variation>
    <location>
        <position position="135"/>
    </location>
</feature>
<dbReference type="EMBL" id="L36927">
    <property type="protein sequence ID" value="AAA64791.1"/>
    <property type="molecule type" value="mRNA"/>
</dbReference>
<dbReference type="EMBL" id="AJ505847">
    <property type="protein sequence ID" value="CAD47855.1"/>
    <property type="molecule type" value="mRNA"/>
</dbReference>
<dbReference type="EMBL" id="AY514052">
    <property type="protein sequence ID" value="AAS67310.1"/>
    <property type="molecule type" value="mRNA"/>
</dbReference>
<dbReference type="PIR" id="T14457">
    <property type="entry name" value="T14457"/>
</dbReference>
<dbReference type="SMR" id="Q6R4R9"/>
<dbReference type="GO" id="GO:0005634">
    <property type="term" value="C:nucleus"/>
    <property type="evidence" value="ECO:0007669"/>
    <property type="project" value="UniProtKB-SubCell"/>
</dbReference>
<dbReference type="GO" id="GO:0003700">
    <property type="term" value="F:DNA-binding transcription factor activity"/>
    <property type="evidence" value="ECO:0007669"/>
    <property type="project" value="InterPro"/>
</dbReference>
<dbReference type="GO" id="GO:0046983">
    <property type="term" value="F:protein dimerization activity"/>
    <property type="evidence" value="ECO:0007669"/>
    <property type="project" value="InterPro"/>
</dbReference>
<dbReference type="GO" id="GO:0000977">
    <property type="term" value="F:RNA polymerase II transcription regulatory region sequence-specific DNA binding"/>
    <property type="evidence" value="ECO:0007669"/>
    <property type="project" value="InterPro"/>
</dbReference>
<dbReference type="GO" id="GO:0030154">
    <property type="term" value="P:cell differentiation"/>
    <property type="evidence" value="ECO:0007669"/>
    <property type="project" value="UniProtKB-KW"/>
</dbReference>
<dbReference type="GO" id="GO:0009908">
    <property type="term" value="P:flower development"/>
    <property type="evidence" value="ECO:0007669"/>
    <property type="project" value="UniProtKB-KW"/>
</dbReference>
<dbReference type="GO" id="GO:0045944">
    <property type="term" value="P:positive regulation of transcription by RNA polymerase II"/>
    <property type="evidence" value="ECO:0007669"/>
    <property type="project" value="InterPro"/>
</dbReference>
<dbReference type="CDD" id="cd00265">
    <property type="entry name" value="MADS_MEF2_like"/>
    <property type="match status" value="1"/>
</dbReference>
<dbReference type="FunFam" id="3.40.1810.10:FF:000003">
    <property type="entry name" value="MADS-box transcription factor MADS-MC"/>
    <property type="match status" value="1"/>
</dbReference>
<dbReference type="Gene3D" id="3.40.1810.10">
    <property type="entry name" value="Transcription factor, MADS-box"/>
    <property type="match status" value="1"/>
</dbReference>
<dbReference type="InterPro" id="IPR050142">
    <property type="entry name" value="MADS-box/MEF2_TF"/>
</dbReference>
<dbReference type="InterPro" id="IPR033896">
    <property type="entry name" value="MEF2-like_N"/>
</dbReference>
<dbReference type="InterPro" id="IPR002487">
    <property type="entry name" value="TF_Kbox"/>
</dbReference>
<dbReference type="InterPro" id="IPR002100">
    <property type="entry name" value="TF_MADSbox"/>
</dbReference>
<dbReference type="InterPro" id="IPR036879">
    <property type="entry name" value="TF_MADSbox_sf"/>
</dbReference>
<dbReference type="PANTHER" id="PTHR48019">
    <property type="entry name" value="SERUM RESPONSE FACTOR HOMOLOG"/>
    <property type="match status" value="1"/>
</dbReference>
<dbReference type="Pfam" id="PF01486">
    <property type="entry name" value="K-box"/>
    <property type="match status" value="1"/>
</dbReference>
<dbReference type="Pfam" id="PF00319">
    <property type="entry name" value="SRF-TF"/>
    <property type="match status" value="1"/>
</dbReference>
<dbReference type="PRINTS" id="PR00404">
    <property type="entry name" value="MADSDOMAIN"/>
</dbReference>
<dbReference type="SMART" id="SM00432">
    <property type="entry name" value="MADS"/>
    <property type="match status" value="1"/>
</dbReference>
<dbReference type="SUPFAM" id="SSF55455">
    <property type="entry name" value="SRF-like"/>
    <property type="match status" value="1"/>
</dbReference>
<dbReference type="PROSITE" id="PS51297">
    <property type="entry name" value="K_BOX"/>
    <property type="match status" value="1"/>
</dbReference>
<dbReference type="PROSITE" id="PS00350">
    <property type="entry name" value="MADS_BOX_1"/>
    <property type="match status" value="1"/>
</dbReference>
<dbReference type="PROSITE" id="PS50066">
    <property type="entry name" value="MADS_BOX_2"/>
    <property type="match status" value="1"/>
</dbReference>
<keyword id="KW-0010">Activator</keyword>
<keyword id="KW-0175">Coiled coil</keyword>
<keyword id="KW-0217">Developmental protein</keyword>
<keyword id="KW-0221">Differentiation</keyword>
<keyword id="KW-0238">DNA-binding</keyword>
<keyword id="KW-0287">Flowering</keyword>
<keyword id="KW-0539">Nucleus</keyword>
<keyword id="KW-0804">Transcription</keyword>
<keyword id="KW-0805">Transcription regulation</keyword>
<reference key="1">
    <citation type="journal article" date="1995" name="Science">
        <title>Molecular basis of the cauliflower phenotype in Arabidopsis.</title>
        <authorList>
            <person name="Kempin S.A."/>
            <person name="Savidge B."/>
            <person name="Yanofsky M.F."/>
        </authorList>
    </citation>
    <scope>NUCLEOTIDE SEQUENCE [MRNA]</scope>
    <source>
        <tissue>Flower meristem</tissue>
    </source>
</reference>
<reference key="2">
    <citation type="thesis" date="2002" institute="University of Warwick" country="United Kingdom">
        <title>MADS-box genes and the genetics of cauliflower curd development.</title>
        <authorList>
            <person name="Kop E.P."/>
        </authorList>
    </citation>
    <scope>NUCLEOTIDE SEQUENCE [MRNA]</scope>
    <source>
        <strain>cv. CA25</strain>
        <tissue>Flower meristem</tissue>
    </source>
</reference>
<reference key="3">
    <citation type="submission" date="2003-12" db="EMBL/GenBank/DDBJ databases">
        <authorList>
            <person name="He Y.-K."/>
            <person name="Cao W.-G."/>
            <person name="Shen R.-J."/>
            <person name="Liu P.-L."/>
        </authorList>
    </citation>
    <scope>NUCLEOTIDE SEQUENCE [MRNA]</scope>
    <source>
        <tissue>Flower meristem</tissue>
    </source>
</reference>
<reference key="4">
    <citation type="journal article" date="1997" name="Planta">
        <title>Floral homeotic gene expression defines developmental arrest stages in Brassica oleracea L. vars. botrytis and italica.</title>
        <authorList>
            <person name="Carr S.M."/>
            <person name="Irish V.F."/>
        </authorList>
    </citation>
    <scope>TISSUE SPECIFICITY</scope>
    <source>
        <tissue>Flower</tissue>
    </source>
</reference>
<reference key="5">
    <citation type="journal article" date="2000" name="Cell Res.">
        <title>Molecular characters and morphological genetics of CAL gene in Chinese cabbage.</title>
        <authorList>
            <person name="Li X.F."/>
            <person name="Shen R.J."/>
            <person name="Liu P.L."/>
            <person name="Tang Z.C."/>
            <person name="He Y.K."/>
        </authorList>
    </citation>
    <scope>FUNCTION</scope>
    <source>
        <strain>cv. H6</strain>
    </source>
</reference>
<reference key="6">
    <citation type="journal article" date="2000" name="Genetics">
        <title>Variation and selection at the CAULIFLOWER floral homeotic gene accompanying the evolution of domesticated Brassica oleracea.</title>
        <authorList>
            <person name="Purugganan M.D."/>
            <person name="Boyles A.L."/>
            <person name="Suddith J.I."/>
        </authorList>
    </citation>
    <scope>REVIEW</scope>
    <scope>GENE FAMILY</scope>
</reference>
<organism>
    <name type="scientific">Brassica oleracea var. botrytis</name>
    <name type="common">Cauliflower</name>
    <dbReference type="NCBI Taxonomy" id="3715"/>
    <lineage>
        <taxon>Eukaryota</taxon>
        <taxon>Viridiplantae</taxon>
        <taxon>Streptophyta</taxon>
        <taxon>Embryophyta</taxon>
        <taxon>Tracheophyta</taxon>
        <taxon>Spermatophyta</taxon>
        <taxon>Magnoliopsida</taxon>
        <taxon>eudicotyledons</taxon>
        <taxon>Gunneridae</taxon>
        <taxon>Pentapetalae</taxon>
        <taxon>rosids</taxon>
        <taxon>malvids</taxon>
        <taxon>Brassicales</taxon>
        <taxon>Brassicaceae</taxon>
        <taxon>Brassiceae</taxon>
        <taxon>Brassica</taxon>
    </lineage>
</organism>
<comment type="function">
    <text evidence="4">Probable transcription factor that promotes early floral meristem identity in synergy with APETALA1, FRUITFULL and LEAFY. Is required subsequently for the transition of an inflorescence meristem into a floral meristem. Seems to be partially redundant to the function of APETALA1.</text>
</comment>
<comment type="subunit">
    <text evidence="1">Homodimer capable of binding to CArG-box sequences.</text>
</comment>
<comment type="subcellular location">
    <subcellularLocation>
        <location evidence="2">Nucleus</location>
    </subcellularLocation>
</comment>
<comment type="tissue specificity">
    <text evidence="5">Expressed in some of the meristems of arrest-stage cauliflower heads.</text>
</comment>
<comment type="miscellaneous">
    <text>This is a truncated version of CAULIFLOWER that may contribute to the 'cauliflower'-shaped floral meristem (curd). This trait has likely been selected by early farmers during the domestication of modified inflorescence structures.</text>
</comment>
<evidence type="ECO:0000250" key="1"/>
<evidence type="ECO:0000255" key="2">
    <source>
        <dbReference type="PROSITE-ProRule" id="PRU00251"/>
    </source>
</evidence>
<evidence type="ECO:0000255" key="3">
    <source>
        <dbReference type="PROSITE-ProRule" id="PRU00629"/>
    </source>
</evidence>
<evidence type="ECO:0000269" key="4">
    <source>
    </source>
</evidence>
<evidence type="ECO:0000269" key="5">
    <source>
    </source>
</evidence>
<evidence type="ECO:0000305" key="6"/>
<proteinExistence type="evidence at transcript level"/>
<sequence length="150" mass="17841">MGRGRVEMKRIENKINRQVTFSKRRAGLLKKAHEISILCDAEVSLIVFSHKGKLFEYSSESCMEKVLERYERYSYAEKQLKAPDSHVNAQTNWSMEYSRLKAKIELWERNQRHYLGEDLESISIKELQNLEQQLDTSLKHIRSRKNQLMH</sequence>
<gene>
    <name type="primary">CAL-A</name>
    <name type="synonym">CAL1</name>
</gene>
<protein>
    <recommendedName>
        <fullName>Truncated transcription factor CAULIFLOWER A</fullName>
        <shortName>BobCAL-a</shortName>
    </recommendedName>
    <alternativeName>
        <fullName>Agamous-like MADS-box protein CAL-A</fullName>
    </alternativeName>
</protein>
<accession>Q6R4R9</accession>
<accession>Q39376</accession>
<accession>Q8GTF3</accession>
<name>CALA_BRAOB</name>